<sequence length="531" mass="59896">MSTPRPEEHQKFSAAAALCPLSNCQFSGVVISAIADEQKLEFTNKYKGSCTLLCSYDSQGIVLRIVLDADREHVLKEYMIAADTDAAQMGRRSYAVTLESDNLVLRFASDQDQQLFRKVVENVKHLRPKSVFSQRTEESSASQYFQFYGYLSQQQNMMQDYVRTSTYQRAILGNAVDFQDKIVLDVGAGSGILSFFAVQAGAAKVYAIEASNMAQYAQQLVESNNVQHKISVIPGKIEEIELPEKVDVIISEPMGYMLYNERMLETYLHARKWLKPNGKMYPTHGDLHIAPFSDESLYSEQYNKANFWYQSAFHGVDLTTLHKEGMKEYFRQPIVDTFDIRICMAKSVRHVCDFLNDKEDDLHLIDIPLEFQILQTGICHGLAFWFDVEFSGSSQNVWLSTSPTAPLTHWYQVRCLLPMPIFIKQGQTLTGRVLLEANRRQSYDVTIDLHIEGTLISSSNTLDLKNPYFRYTGAPVQAPPGTSTQSPSEQYWTQVDTQGSRNSSSMLNGGLGVNGIGDGSMDITHGLMHPH</sequence>
<name>CARM1_DROPE</name>
<proteinExistence type="inferred from homology"/>
<protein>
    <recommendedName>
        <fullName evidence="3">Histone-arginine methyltransferase CARMER</fullName>
        <ecNumber evidence="3">2.1.1.319</ecNumber>
    </recommendedName>
</protein>
<evidence type="ECO:0000250" key="1"/>
<evidence type="ECO:0000250" key="2">
    <source>
        <dbReference type="UniProtKB" id="Q63009"/>
    </source>
</evidence>
<evidence type="ECO:0000250" key="3">
    <source>
        <dbReference type="UniProtKB" id="Q7Q2B7"/>
    </source>
</evidence>
<evidence type="ECO:0000250" key="4">
    <source>
        <dbReference type="UniProtKB" id="Q9VH48"/>
    </source>
</evidence>
<evidence type="ECO:0000255" key="5">
    <source>
        <dbReference type="PROSITE-ProRule" id="PRU01015"/>
    </source>
</evidence>
<evidence type="ECO:0000312" key="6">
    <source>
        <dbReference type="EMBL" id="EDW28038.1"/>
    </source>
</evidence>
<comment type="function">
    <text evidence="3">Methylates (mono- and asymmetric dimethylation) the guanidino nitrogens of arginyl residues in proteins. May methylate histone H3 at 'Arg-17' and activate transcription via chromatin remodeling (By similarity).</text>
</comment>
<comment type="catalytic activity">
    <reaction evidence="3">
        <text>L-arginyl-[protein] + 2 S-adenosyl-L-methionine = N(omega),N(omega)-dimethyl-L-arginyl-[protein] + 2 S-adenosyl-L-homocysteine + 2 H(+)</text>
        <dbReference type="Rhea" id="RHEA:48096"/>
        <dbReference type="Rhea" id="RHEA-COMP:10532"/>
        <dbReference type="Rhea" id="RHEA-COMP:11991"/>
        <dbReference type="ChEBI" id="CHEBI:15378"/>
        <dbReference type="ChEBI" id="CHEBI:29965"/>
        <dbReference type="ChEBI" id="CHEBI:57856"/>
        <dbReference type="ChEBI" id="CHEBI:59789"/>
        <dbReference type="ChEBI" id="CHEBI:61897"/>
        <dbReference type="EC" id="2.1.1.319"/>
    </reaction>
</comment>
<comment type="subunit">
    <text evidence="1">Homodimer.</text>
</comment>
<comment type="subcellular location">
    <subcellularLocation>
        <location evidence="4">Cytoplasm</location>
    </subcellularLocation>
    <subcellularLocation>
        <location evidence="4">Nucleus</location>
    </subcellularLocation>
</comment>
<comment type="PTM">
    <text evidence="1">The dimethylated protein is the major form.</text>
</comment>
<comment type="similarity">
    <text evidence="5">Belongs to the class I-like SAM-binding methyltransferase superfamily. Protein arginine N-methyltransferase family.</text>
</comment>
<keyword id="KW-0156">Chromatin regulator</keyword>
<keyword id="KW-0963">Cytoplasm</keyword>
<keyword id="KW-0488">Methylation</keyword>
<keyword id="KW-0489">Methyltransferase</keyword>
<keyword id="KW-0539">Nucleus</keyword>
<keyword id="KW-1185">Reference proteome</keyword>
<keyword id="KW-0949">S-adenosyl-L-methionine</keyword>
<keyword id="KW-0804">Transcription</keyword>
<keyword id="KW-0805">Transcription regulation</keyword>
<keyword id="KW-0808">Transferase</keyword>
<reference evidence="6" key="1">
    <citation type="journal article" date="2007" name="Nature">
        <title>Evolution of genes and genomes on the Drosophila phylogeny.</title>
        <authorList>
            <consortium name="Drosophila 12 genomes consortium"/>
        </authorList>
    </citation>
    <scope>NUCLEOTIDE SEQUENCE [LARGE SCALE GENOMIC DNA]</scope>
    <source>
        <strain>MSH-3 / Tucson 14011-0111.49</strain>
    </source>
</reference>
<organism>
    <name type="scientific">Drosophila persimilis</name>
    <name type="common">Fruit fly</name>
    <dbReference type="NCBI Taxonomy" id="7234"/>
    <lineage>
        <taxon>Eukaryota</taxon>
        <taxon>Metazoa</taxon>
        <taxon>Ecdysozoa</taxon>
        <taxon>Arthropoda</taxon>
        <taxon>Hexapoda</taxon>
        <taxon>Insecta</taxon>
        <taxon>Pterygota</taxon>
        <taxon>Neoptera</taxon>
        <taxon>Endopterygota</taxon>
        <taxon>Diptera</taxon>
        <taxon>Brachycera</taxon>
        <taxon>Muscomorpha</taxon>
        <taxon>Ephydroidea</taxon>
        <taxon>Drosophilidae</taxon>
        <taxon>Drosophila</taxon>
        <taxon>Sophophora</taxon>
    </lineage>
</organism>
<dbReference type="EC" id="2.1.1.319" evidence="3"/>
<dbReference type="EMBL" id="CH479198">
    <property type="protein sequence ID" value="EDW28038.1"/>
    <property type="molecule type" value="Genomic_DNA"/>
</dbReference>
<dbReference type="SMR" id="B4GZ20"/>
<dbReference type="STRING" id="7234.B4GZ20"/>
<dbReference type="EnsemblMetazoa" id="FBtr0192903">
    <property type="protein sequence ID" value="FBpp0191395"/>
    <property type="gene ID" value="FBgn0164869"/>
</dbReference>
<dbReference type="EnsemblMetazoa" id="XM_002023799.2">
    <property type="protein sequence ID" value="XP_002023835.1"/>
    <property type="gene ID" value="LOC6598623"/>
</dbReference>
<dbReference type="GeneID" id="6598623"/>
<dbReference type="KEGG" id="dpe:6598623"/>
<dbReference type="CTD" id="420"/>
<dbReference type="eggNOG" id="KOG1500">
    <property type="taxonomic scope" value="Eukaryota"/>
</dbReference>
<dbReference type="HOGENOM" id="CLU_017375_0_1_1"/>
<dbReference type="OMA" id="GIGDGMD"/>
<dbReference type="OrthoDB" id="7848332at2759"/>
<dbReference type="PhylomeDB" id="B4GZ20"/>
<dbReference type="Proteomes" id="UP000008744">
    <property type="component" value="Unassembled WGS sequence"/>
</dbReference>
<dbReference type="GO" id="GO:0005737">
    <property type="term" value="C:cytoplasm"/>
    <property type="evidence" value="ECO:0000250"/>
    <property type="project" value="UniProtKB"/>
</dbReference>
<dbReference type="GO" id="GO:0005829">
    <property type="term" value="C:cytosol"/>
    <property type="evidence" value="ECO:0007669"/>
    <property type="project" value="EnsemblMetazoa"/>
</dbReference>
<dbReference type="GO" id="GO:0035097">
    <property type="term" value="C:histone methyltransferase complex"/>
    <property type="evidence" value="ECO:0007669"/>
    <property type="project" value="EnsemblMetazoa"/>
</dbReference>
<dbReference type="GO" id="GO:0005634">
    <property type="term" value="C:nucleus"/>
    <property type="evidence" value="ECO:0000250"/>
    <property type="project" value="UniProtKB"/>
</dbReference>
<dbReference type="GO" id="GO:0035642">
    <property type="term" value="F:histone H3R17 methyltransferase activity"/>
    <property type="evidence" value="ECO:0000250"/>
    <property type="project" value="UniProtKB"/>
</dbReference>
<dbReference type="GO" id="GO:0070611">
    <property type="term" value="F:histone H3R2 methyltransferase activity"/>
    <property type="evidence" value="ECO:0000250"/>
    <property type="project" value="UniProtKB"/>
</dbReference>
<dbReference type="GO" id="GO:0140903">
    <property type="term" value="F:histone H3R26 methyltransferase activity"/>
    <property type="evidence" value="ECO:0000250"/>
    <property type="project" value="UniProtKB"/>
</dbReference>
<dbReference type="GO" id="GO:0035242">
    <property type="term" value="F:protein-arginine omega-N asymmetric methyltransferase activity"/>
    <property type="evidence" value="ECO:0000250"/>
    <property type="project" value="UniProtKB"/>
</dbReference>
<dbReference type="GO" id="GO:0035241">
    <property type="term" value="F:protein-arginine omega-N monomethyltransferase activity"/>
    <property type="evidence" value="ECO:0000250"/>
    <property type="project" value="UniProtKB"/>
</dbReference>
<dbReference type="GO" id="GO:0006338">
    <property type="term" value="P:chromatin remodeling"/>
    <property type="evidence" value="ECO:0000250"/>
    <property type="project" value="UniProtKB"/>
</dbReference>
<dbReference type="GO" id="GO:0019919">
    <property type="term" value="P:peptidyl-arginine methylation, to asymmetrical-dimethyl arginine"/>
    <property type="evidence" value="ECO:0000250"/>
    <property type="project" value="UniProtKB"/>
</dbReference>
<dbReference type="GO" id="GO:0120142">
    <property type="term" value="P:positive regulation of ecdysone receptor signaling pathway"/>
    <property type="evidence" value="ECO:0007669"/>
    <property type="project" value="EnsemblMetazoa"/>
</dbReference>
<dbReference type="GO" id="GO:0045944">
    <property type="term" value="P:positive regulation of transcription by RNA polymerase II"/>
    <property type="evidence" value="ECO:0007669"/>
    <property type="project" value="EnsemblMetazoa"/>
</dbReference>
<dbReference type="GO" id="GO:0006355">
    <property type="term" value="P:regulation of DNA-templated transcription"/>
    <property type="evidence" value="ECO:0000250"/>
    <property type="project" value="UniProtKB"/>
</dbReference>
<dbReference type="CDD" id="cd02440">
    <property type="entry name" value="AdoMet_MTases"/>
    <property type="match status" value="1"/>
</dbReference>
<dbReference type="FunFam" id="2.30.29.30:FF:000449">
    <property type="entry name" value="Histone-arginine methyltransferase CARMER"/>
    <property type="match status" value="1"/>
</dbReference>
<dbReference type="FunFam" id="2.70.160.11:FF:000002">
    <property type="entry name" value="Probable histone-arginine methyltransferase CARM1"/>
    <property type="match status" value="1"/>
</dbReference>
<dbReference type="FunFam" id="3.40.50.150:FF:000031">
    <property type="entry name" value="Putative Histone-arginine methyltransferase CARM1"/>
    <property type="match status" value="1"/>
</dbReference>
<dbReference type="Gene3D" id="2.70.160.11">
    <property type="entry name" value="Hnrnp arginine n-methyltransferase1"/>
    <property type="match status" value="1"/>
</dbReference>
<dbReference type="Gene3D" id="2.30.29.30">
    <property type="entry name" value="Pleckstrin-homology domain (PH domain)/Phosphotyrosine-binding domain (PTB)"/>
    <property type="match status" value="1"/>
</dbReference>
<dbReference type="Gene3D" id="3.40.50.150">
    <property type="entry name" value="Vaccinia Virus protein VP39"/>
    <property type="match status" value="1"/>
</dbReference>
<dbReference type="InterPro" id="IPR025799">
    <property type="entry name" value="Arg_MeTrfase"/>
</dbReference>
<dbReference type="InterPro" id="IPR011993">
    <property type="entry name" value="PH-like_dom_sf"/>
</dbReference>
<dbReference type="InterPro" id="IPR055135">
    <property type="entry name" value="PRMT_dom"/>
</dbReference>
<dbReference type="InterPro" id="IPR029063">
    <property type="entry name" value="SAM-dependent_MTases_sf"/>
</dbReference>
<dbReference type="PANTHER" id="PTHR11006:SF10">
    <property type="entry name" value="HISTONE-ARGININE METHYLTRANSFERASE CARMER-RELATED"/>
    <property type="match status" value="1"/>
</dbReference>
<dbReference type="PANTHER" id="PTHR11006">
    <property type="entry name" value="PROTEIN ARGININE N-METHYLTRANSFERASE"/>
    <property type="match status" value="1"/>
</dbReference>
<dbReference type="Pfam" id="PF06325">
    <property type="entry name" value="PrmA"/>
    <property type="match status" value="1"/>
</dbReference>
<dbReference type="Pfam" id="PF22528">
    <property type="entry name" value="PRMT_C"/>
    <property type="match status" value="1"/>
</dbReference>
<dbReference type="SUPFAM" id="SSF53335">
    <property type="entry name" value="S-adenosyl-L-methionine-dependent methyltransferases"/>
    <property type="match status" value="1"/>
</dbReference>
<dbReference type="PROSITE" id="PS51678">
    <property type="entry name" value="SAM_MT_PRMT"/>
    <property type="match status" value="1"/>
</dbReference>
<accession>B4GZ20</accession>
<feature type="chain" id="PRO_0000382225" description="Histone-arginine methyltransferase CARMER">
    <location>
        <begin position="1"/>
        <end position="531"/>
    </location>
</feature>
<feature type="domain" description="SAM-dependent MTase PRMT-type" evidence="5">
    <location>
        <begin position="141"/>
        <end position="450"/>
    </location>
</feature>
<feature type="binding site" evidence="2">
    <location>
        <position position="154"/>
    </location>
    <ligand>
        <name>S-adenosyl-L-methionine</name>
        <dbReference type="ChEBI" id="CHEBI:59789"/>
    </ligand>
</feature>
<feature type="binding site" evidence="2">
    <location>
        <position position="163"/>
    </location>
    <ligand>
        <name>S-adenosyl-L-methionine</name>
        <dbReference type="ChEBI" id="CHEBI:59789"/>
    </ligand>
</feature>
<feature type="binding site" evidence="2">
    <location>
        <position position="187"/>
    </location>
    <ligand>
        <name>S-adenosyl-L-methionine</name>
        <dbReference type="ChEBI" id="CHEBI:59789"/>
    </ligand>
</feature>
<feature type="binding site" evidence="2">
    <location>
        <position position="209"/>
    </location>
    <ligand>
        <name>S-adenosyl-L-methionine</name>
        <dbReference type="ChEBI" id="CHEBI:59789"/>
    </ligand>
</feature>
<feature type="binding site" evidence="2">
    <location>
        <position position="238"/>
    </location>
    <ligand>
        <name>S-adenosyl-L-methionine</name>
        <dbReference type="ChEBI" id="CHEBI:59789"/>
    </ligand>
</feature>
<feature type="binding site" evidence="1">
    <location>
        <position position="266"/>
    </location>
    <ligand>
        <name>S-adenosyl-L-methionine</name>
        <dbReference type="ChEBI" id="CHEBI:59789"/>
    </ligand>
</feature>
<feature type="modified residue" description="Asymmetric dimethylarginine; by autocatalysis" evidence="3">
    <location>
        <position position="501"/>
    </location>
</feature>
<gene>
    <name type="primary">Art4</name>
    <name type="ORF">GL27288</name>
</gene>